<evidence type="ECO:0000255" key="1"/>
<evidence type="ECO:0000255" key="2">
    <source>
        <dbReference type="PROSITE-ProRule" id="PRU00210"/>
    </source>
</evidence>
<evidence type="ECO:0000255" key="3">
    <source>
        <dbReference type="PROSITE-ProRule" id="PRU00352"/>
    </source>
</evidence>
<evidence type="ECO:0000269" key="4">
    <source>
    </source>
</evidence>
<evidence type="ECO:0000303" key="5">
    <source>
    </source>
</evidence>
<evidence type="ECO:0000303" key="6">
    <source>
    </source>
</evidence>
<evidence type="ECO:0000305" key="7"/>
<dbReference type="EMBL" id="X97818">
    <property type="protein sequence ID" value="CAA66398.1"/>
    <property type="molecule type" value="mRNA"/>
</dbReference>
<dbReference type="EMBL" id="AC154653">
    <property type="status" value="NOT_ANNOTATED_CDS"/>
    <property type="molecule type" value="Genomic_DNA"/>
</dbReference>
<dbReference type="EMBL" id="CT010576">
    <property type="status" value="NOT_ANNOTATED_CDS"/>
    <property type="molecule type" value="Genomic_DNA"/>
</dbReference>
<dbReference type="EMBL" id="CH466521">
    <property type="protein sequence ID" value="EDK97889.1"/>
    <property type="molecule type" value="Genomic_DNA"/>
</dbReference>
<dbReference type="EMBL" id="BC052397">
    <property type="protein sequence ID" value="AAH52397.1"/>
    <property type="molecule type" value="mRNA"/>
</dbReference>
<dbReference type="EMBL" id="AK129362">
    <property type="protein sequence ID" value="BAC98172.1"/>
    <property type="molecule type" value="mRNA"/>
</dbReference>
<dbReference type="EMBL" id="AK078659">
    <property type="protein sequence ID" value="BAC37350.1"/>
    <property type="molecule type" value="mRNA"/>
</dbReference>
<dbReference type="CCDS" id="CCDS28140.1">
    <molecule id="Q60519-1"/>
</dbReference>
<dbReference type="RefSeq" id="NP_038689.2">
    <molecule id="Q60519-1"/>
    <property type="nucleotide sequence ID" value="NM_013661.3"/>
</dbReference>
<dbReference type="RefSeq" id="XP_006521932.1">
    <molecule id="Q60519-3"/>
    <property type="nucleotide sequence ID" value="XM_006521869.2"/>
</dbReference>
<dbReference type="RefSeq" id="XP_011244146.1">
    <molecule id="Q60519-3"/>
    <property type="nucleotide sequence ID" value="XM_011245844.1"/>
</dbReference>
<dbReference type="RefSeq" id="XP_030104866.1">
    <molecule id="Q60519-1"/>
    <property type="nucleotide sequence ID" value="XM_030249006.1"/>
</dbReference>
<dbReference type="SMR" id="Q60519"/>
<dbReference type="BioGRID" id="203172">
    <property type="interactions" value="4"/>
</dbReference>
<dbReference type="FunCoup" id="Q60519">
    <property type="interactions" value="228"/>
</dbReference>
<dbReference type="STRING" id="10090.ENSMUSP00000057494"/>
<dbReference type="GlyCosmos" id="Q60519">
    <property type="glycosylation" value="13 sites, No reported glycans"/>
</dbReference>
<dbReference type="GlyGen" id="Q60519">
    <property type="glycosylation" value="13 sites, 3 N-linked glycans (5 sites)"/>
</dbReference>
<dbReference type="iPTMnet" id="Q60519"/>
<dbReference type="PhosphoSitePlus" id="Q60519"/>
<dbReference type="SwissPalm" id="Q60519"/>
<dbReference type="PaxDb" id="10090-ENSMUSP00000057494"/>
<dbReference type="ProteomicsDB" id="256945">
    <molecule id="Q60519-1"/>
</dbReference>
<dbReference type="ProteomicsDB" id="256946">
    <molecule id="Q60519-2"/>
</dbReference>
<dbReference type="ProteomicsDB" id="256947">
    <molecule id="Q60519-3"/>
</dbReference>
<dbReference type="Antibodypedia" id="2250">
    <property type="antibodies" value="118 antibodies from 13 providers"/>
</dbReference>
<dbReference type="DNASU" id="20357"/>
<dbReference type="Ensembl" id="ENSMUST00000050625.15">
    <molecule id="Q60519-1"/>
    <property type="protein sequence ID" value="ENSMUSP00000057494.9"/>
    <property type="gene ID" value="ENSMUSG00000052133.17"/>
</dbReference>
<dbReference type="Ensembl" id="ENSMUST00000120756.8">
    <molecule id="Q60519-3"/>
    <property type="protein sequence ID" value="ENSMUSP00000112536.2"/>
    <property type="gene ID" value="ENSMUSG00000052133.17"/>
</dbReference>
<dbReference type="GeneID" id="20357"/>
<dbReference type="KEGG" id="mmu:20357"/>
<dbReference type="UCSC" id="uc007zbm.2">
    <molecule id="Q60519-1"/>
    <property type="organism name" value="mouse"/>
</dbReference>
<dbReference type="UCSC" id="uc012aez.1">
    <molecule id="Q60519-3"/>
    <property type="organism name" value="mouse"/>
</dbReference>
<dbReference type="AGR" id="MGI:107555"/>
<dbReference type="CTD" id="54437"/>
<dbReference type="MGI" id="MGI:107555">
    <property type="gene designation" value="Sema5b"/>
</dbReference>
<dbReference type="VEuPathDB" id="HostDB:ENSMUSG00000052133"/>
<dbReference type="eggNOG" id="KOG3611">
    <property type="taxonomic scope" value="Eukaryota"/>
</dbReference>
<dbReference type="GeneTree" id="ENSGT00940000156712"/>
<dbReference type="HOGENOM" id="CLU_005410_1_0_1"/>
<dbReference type="InParanoid" id="Q60519"/>
<dbReference type="OMA" id="ERYCRND"/>
<dbReference type="OrthoDB" id="3344at9989"/>
<dbReference type="TreeFam" id="TF329951"/>
<dbReference type="Reactome" id="R-MMU-5173214">
    <property type="pathway name" value="O-glycosylation of TSR domain-containing proteins"/>
</dbReference>
<dbReference type="BioGRID-ORCS" id="20357">
    <property type="hits" value="2 hits in 79 CRISPR screens"/>
</dbReference>
<dbReference type="ChiTaRS" id="Sema5b">
    <property type="organism name" value="mouse"/>
</dbReference>
<dbReference type="PRO" id="PR:Q60519"/>
<dbReference type="Proteomes" id="UP000000589">
    <property type="component" value="Chromosome 16"/>
</dbReference>
<dbReference type="RNAct" id="Q60519">
    <property type="molecule type" value="protein"/>
</dbReference>
<dbReference type="Bgee" id="ENSMUSG00000052133">
    <property type="expression patterns" value="Expressed in floor plate of midbrain and 137 other cell types or tissues"/>
</dbReference>
<dbReference type="GO" id="GO:0016020">
    <property type="term" value="C:membrane"/>
    <property type="evidence" value="ECO:0007669"/>
    <property type="project" value="UniProtKB-SubCell"/>
</dbReference>
<dbReference type="GO" id="GO:0030215">
    <property type="term" value="F:semaphorin receptor binding"/>
    <property type="evidence" value="ECO:0007669"/>
    <property type="project" value="InterPro"/>
</dbReference>
<dbReference type="GO" id="GO:0048675">
    <property type="term" value="P:axon extension"/>
    <property type="evidence" value="ECO:0000316"/>
    <property type="project" value="MGI"/>
</dbReference>
<dbReference type="GO" id="GO:0050908">
    <property type="term" value="P:detection of light stimulus involved in visual perception"/>
    <property type="evidence" value="ECO:0000316"/>
    <property type="project" value="MGI"/>
</dbReference>
<dbReference type="GO" id="GO:1990138">
    <property type="term" value="P:neuron projection extension"/>
    <property type="evidence" value="ECO:0000314"/>
    <property type="project" value="MGI"/>
</dbReference>
<dbReference type="GO" id="GO:0097485">
    <property type="term" value="P:neuron projection guidance"/>
    <property type="evidence" value="ECO:0000315"/>
    <property type="project" value="MGI"/>
</dbReference>
<dbReference type="FunFam" id="2.20.100.10:FF:000001">
    <property type="entry name" value="semaphorin-5A isoform X1"/>
    <property type="match status" value="4"/>
</dbReference>
<dbReference type="FunFam" id="2.130.10.10:FF:000048">
    <property type="entry name" value="semaphorin-5B isoform X1"/>
    <property type="match status" value="1"/>
</dbReference>
<dbReference type="FunFam" id="2.20.100.10:FF:000021">
    <property type="entry name" value="semaphorin-5B isoform X1"/>
    <property type="match status" value="1"/>
</dbReference>
<dbReference type="FunFam" id="3.30.1680.10:FF:000003">
    <property type="entry name" value="semaphorin-5B isoform X1"/>
    <property type="match status" value="1"/>
</dbReference>
<dbReference type="Gene3D" id="3.30.1680.10">
    <property type="entry name" value="ligand-binding face of the semaphorins, domain 2"/>
    <property type="match status" value="1"/>
</dbReference>
<dbReference type="Gene3D" id="2.20.100.10">
    <property type="entry name" value="Thrombospondin type-1 (TSP1) repeat"/>
    <property type="match status" value="5"/>
</dbReference>
<dbReference type="Gene3D" id="2.130.10.10">
    <property type="entry name" value="YVTN repeat-like/Quinoprotein amine dehydrogenase"/>
    <property type="match status" value="1"/>
</dbReference>
<dbReference type="InterPro" id="IPR002165">
    <property type="entry name" value="Plexin_repeat"/>
</dbReference>
<dbReference type="InterPro" id="IPR016201">
    <property type="entry name" value="PSI"/>
</dbReference>
<dbReference type="InterPro" id="IPR001627">
    <property type="entry name" value="Semap_dom"/>
</dbReference>
<dbReference type="InterPro" id="IPR036352">
    <property type="entry name" value="Semap_dom_sf"/>
</dbReference>
<dbReference type="InterPro" id="IPR027231">
    <property type="entry name" value="Semaphorin"/>
</dbReference>
<dbReference type="InterPro" id="IPR000884">
    <property type="entry name" value="TSP1_rpt"/>
</dbReference>
<dbReference type="InterPro" id="IPR036383">
    <property type="entry name" value="TSP1_rpt_sf"/>
</dbReference>
<dbReference type="InterPro" id="IPR015943">
    <property type="entry name" value="WD40/YVTN_repeat-like_dom_sf"/>
</dbReference>
<dbReference type="PANTHER" id="PTHR11036">
    <property type="entry name" value="SEMAPHORIN"/>
    <property type="match status" value="1"/>
</dbReference>
<dbReference type="PANTHER" id="PTHR11036:SF39">
    <property type="entry name" value="SEMAPHORIN-5B"/>
    <property type="match status" value="1"/>
</dbReference>
<dbReference type="Pfam" id="PF01437">
    <property type="entry name" value="PSI"/>
    <property type="match status" value="1"/>
</dbReference>
<dbReference type="Pfam" id="PF01403">
    <property type="entry name" value="Sema"/>
    <property type="match status" value="1"/>
</dbReference>
<dbReference type="Pfam" id="PF23260">
    <property type="entry name" value="TSP1_2"/>
    <property type="match status" value="1"/>
</dbReference>
<dbReference type="Pfam" id="PF00090">
    <property type="entry name" value="TSP_1"/>
    <property type="match status" value="5"/>
</dbReference>
<dbReference type="PRINTS" id="PR01705">
    <property type="entry name" value="TSP1REPEAT"/>
</dbReference>
<dbReference type="SMART" id="SM00423">
    <property type="entry name" value="PSI"/>
    <property type="match status" value="1"/>
</dbReference>
<dbReference type="SMART" id="SM00630">
    <property type="entry name" value="Sema"/>
    <property type="match status" value="1"/>
</dbReference>
<dbReference type="SMART" id="SM00209">
    <property type="entry name" value="TSP1"/>
    <property type="match status" value="5"/>
</dbReference>
<dbReference type="SUPFAM" id="SSF103575">
    <property type="entry name" value="Plexin repeat"/>
    <property type="match status" value="1"/>
</dbReference>
<dbReference type="SUPFAM" id="SSF101912">
    <property type="entry name" value="Sema domain"/>
    <property type="match status" value="1"/>
</dbReference>
<dbReference type="SUPFAM" id="SSF82895">
    <property type="entry name" value="TSP-1 type 1 repeat"/>
    <property type="match status" value="4"/>
</dbReference>
<dbReference type="PROSITE" id="PS51004">
    <property type="entry name" value="SEMA"/>
    <property type="match status" value="1"/>
</dbReference>
<dbReference type="PROSITE" id="PS50092">
    <property type="entry name" value="TSP1"/>
    <property type="match status" value="5"/>
</dbReference>
<protein>
    <recommendedName>
        <fullName>Semaphorin-5B</fullName>
    </recommendedName>
    <alternativeName>
        <fullName>Semaphorin-G</fullName>
        <shortName>Sema G</shortName>
    </alternativeName>
</protein>
<keyword id="KW-0025">Alternative splicing</keyword>
<keyword id="KW-0217">Developmental protein</keyword>
<keyword id="KW-0221">Differentiation</keyword>
<keyword id="KW-1015">Disulfide bond</keyword>
<keyword id="KW-0325">Glycoprotein</keyword>
<keyword id="KW-0472">Membrane</keyword>
<keyword id="KW-0524">Neurogenesis</keyword>
<keyword id="KW-1185">Reference proteome</keyword>
<keyword id="KW-0677">Repeat</keyword>
<keyword id="KW-0732">Signal</keyword>
<keyword id="KW-0812">Transmembrane</keyword>
<keyword id="KW-1133">Transmembrane helix</keyword>
<organism>
    <name type="scientific">Mus musculus</name>
    <name type="common">Mouse</name>
    <dbReference type="NCBI Taxonomy" id="10090"/>
    <lineage>
        <taxon>Eukaryota</taxon>
        <taxon>Metazoa</taxon>
        <taxon>Chordata</taxon>
        <taxon>Craniata</taxon>
        <taxon>Vertebrata</taxon>
        <taxon>Euteleostomi</taxon>
        <taxon>Mammalia</taxon>
        <taxon>Eutheria</taxon>
        <taxon>Euarchontoglires</taxon>
        <taxon>Glires</taxon>
        <taxon>Rodentia</taxon>
        <taxon>Myomorpha</taxon>
        <taxon>Muroidea</taxon>
        <taxon>Muridae</taxon>
        <taxon>Murinae</taxon>
        <taxon>Mus</taxon>
        <taxon>Mus</taxon>
    </lineage>
</organism>
<feature type="signal peptide" evidence="1">
    <location>
        <begin position="1"/>
        <end position="19"/>
    </location>
</feature>
<feature type="chain" id="PRO_0000032338" description="Semaphorin-5B">
    <location>
        <begin position="20"/>
        <end position="1093"/>
    </location>
</feature>
<feature type="topological domain" description="Extracellular" evidence="1">
    <location>
        <begin position="20"/>
        <end position="978"/>
    </location>
</feature>
<feature type="transmembrane region" description="Helical" evidence="1">
    <location>
        <begin position="979"/>
        <end position="999"/>
    </location>
</feature>
<feature type="topological domain" description="Cytoplasmic" evidence="1">
    <location>
        <begin position="1000"/>
        <end position="1093"/>
    </location>
</feature>
<feature type="domain" description="Sema" evidence="3">
    <location>
        <begin position="45"/>
        <end position="495"/>
    </location>
</feature>
<feature type="domain" description="TSP type-1 1" evidence="2">
    <location>
        <begin position="551"/>
        <end position="605"/>
    </location>
</feature>
<feature type="domain" description="TSP type-1 2" evidence="2">
    <location>
        <begin position="606"/>
        <end position="662"/>
    </location>
</feature>
<feature type="domain" description="TSP type-1 3" evidence="2">
    <location>
        <begin position="664"/>
        <end position="713"/>
    </location>
</feature>
<feature type="domain" description="TSP type-1 4" evidence="2">
    <location>
        <begin position="721"/>
        <end position="776"/>
    </location>
</feature>
<feature type="domain" description="TSP type-1 5" evidence="2">
    <location>
        <begin position="795"/>
        <end position="850"/>
    </location>
</feature>
<feature type="domain" description="TSP type-1 6" evidence="2">
    <location>
        <begin position="852"/>
        <end position="907"/>
    </location>
</feature>
<feature type="domain" description="TSP type-1 7" evidence="2">
    <location>
        <begin position="908"/>
        <end position="952"/>
    </location>
</feature>
<feature type="glycosylation site" description="N-linked (GlcNAc...) asparagine" evidence="1">
    <location>
        <position position="59"/>
    </location>
</feature>
<feature type="glycosylation site" description="N-linked (GlcNAc...) asparagine" evidence="1">
    <location>
        <position position="95"/>
    </location>
</feature>
<feature type="glycosylation site" description="N-linked (GlcNAc...) asparagine" evidence="1">
    <location>
        <position position="157"/>
    </location>
</feature>
<feature type="glycosylation site" description="N-linked (GlcNAc...) asparagine" evidence="1">
    <location>
        <position position="178"/>
    </location>
</feature>
<feature type="glycosylation site" description="N-linked (GlcNAc...) asparagine" evidence="1">
    <location>
        <position position="287"/>
    </location>
</feature>
<feature type="glycosylation site" description="N-linked (GlcNAc...) asparagine" evidence="1">
    <location>
        <position position="333"/>
    </location>
</feature>
<feature type="glycosylation site" description="N-linked (GlcNAc...) asparagine" evidence="1">
    <location>
        <position position="378"/>
    </location>
</feature>
<feature type="glycosylation site" description="N-linked (GlcNAc...) asparagine" evidence="1">
    <location>
        <position position="532"/>
    </location>
</feature>
<feature type="glycosylation site" description="N-linked (GlcNAc...) asparagine" evidence="1">
    <location>
        <position position="539"/>
    </location>
</feature>
<feature type="glycosylation site" description="N-linked (GlcNAc...) asparagine" evidence="1">
    <location>
        <position position="547"/>
    </location>
</feature>
<feature type="glycosylation site" description="N-linked (GlcNAc...) asparagine" evidence="1">
    <location>
        <position position="602"/>
    </location>
</feature>
<feature type="glycosylation site" description="N-linked (GlcNAc...) asparagine" evidence="1">
    <location>
        <position position="728"/>
    </location>
</feature>
<feature type="glycosylation site" description="N-linked (GlcNAc...) asparagine" evidence="1">
    <location>
        <position position="944"/>
    </location>
</feature>
<feature type="disulfide bond" evidence="3">
    <location>
        <begin position="114"/>
        <end position="124"/>
    </location>
</feature>
<feature type="disulfide bond" evidence="3">
    <location>
        <begin position="141"/>
        <end position="150"/>
    </location>
</feature>
<feature type="disulfide bond" evidence="3">
    <location>
        <begin position="264"/>
        <end position="367"/>
    </location>
</feature>
<feature type="disulfide bond" evidence="3">
    <location>
        <begin position="288"/>
        <end position="330"/>
    </location>
</feature>
<feature type="disulfide bond" evidence="2">
    <location>
        <begin position="618"/>
        <end position="655"/>
    </location>
</feature>
<feature type="disulfide bond" evidence="2">
    <location>
        <begin position="622"/>
        <end position="661"/>
    </location>
</feature>
<feature type="disulfide bond" evidence="2">
    <location>
        <begin position="633"/>
        <end position="645"/>
    </location>
</feature>
<feature type="disulfide bond" evidence="2">
    <location>
        <begin position="676"/>
        <end position="707"/>
    </location>
</feature>
<feature type="disulfide bond" evidence="2">
    <location>
        <begin position="680"/>
        <end position="712"/>
    </location>
</feature>
<feature type="disulfide bond" evidence="2">
    <location>
        <begin position="691"/>
        <end position="697"/>
    </location>
</feature>
<feature type="disulfide bond" evidence="2">
    <location>
        <begin position="807"/>
        <end position="844"/>
    </location>
</feature>
<feature type="disulfide bond" evidence="2">
    <location>
        <begin position="811"/>
        <end position="849"/>
    </location>
</feature>
<feature type="disulfide bond" evidence="2">
    <location>
        <begin position="822"/>
        <end position="834"/>
    </location>
</feature>
<feature type="disulfide bond" evidence="2">
    <location>
        <begin position="864"/>
        <end position="901"/>
    </location>
</feature>
<feature type="disulfide bond" evidence="2">
    <location>
        <begin position="868"/>
        <end position="906"/>
    </location>
</feature>
<feature type="disulfide bond" evidence="2">
    <location>
        <begin position="879"/>
        <end position="891"/>
    </location>
</feature>
<feature type="splice variant" id="VSP_029466" description="In isoform 3." evidence="5">
    <original>V</original>
    <variation>VVRSRGWGAGSGETYSPGGVGGSEATLTPK</variation>
    <location>
        <position position="702"/>
    </location>
</feature>
<feature type="splice variant" id="VSP_029467" description="In isoform 2." evidence="6">
    <location>
        <position position="908"/>
    </location>
</feature>
<feature type="splice variant" id="VSP_029468" description="In isoform 2." evidence="6">
    <original>KTLNKNNLIPDDRANFYPLQQTNVYTTTYYPSPLNKPSFRPEASPGQRCFPNS</original>
    <variation>TSEATRPSKGNIRCGPTLSSSCVELGNPAGGH</variation>
    <location>
        <begin position="1041"/>
        <end position="1093"/>
    </location>
</feature>
<feature type="sequence conflict" description="In Ref. 1; CAA66398." evidence="7" ref="1">
    <original>A</original>
    <variation>G</variation>
    <location>
        <position position="84"/>
    </location>
</feature>
<feature type="sequence conflict" description="In Ref. 1; CAA66398." evidence="7" ref="1">
    <original>V</original>
    <variation>I</variation>
    <location>
        <position position="493"/>
    </location>
</feature>
<feature type="sequence conflict" description="In Ref. 6; BAC37350." evidence="7" ref="6">
    <original>P</original>
    <variation>Q</variation>
    <location>
        <position position="791"/>
    </location>
</feature>
<feature type="sequence conflict" description="In Ref. 6; BAC37350." evidence="7" ref="6">
    <original>R</original>
    <variation>S</variation>
    <location>
        <position position="1006"/>
    </location>
</feature>
<reference key="1">
    <citation type="journal article" date="1996" name="Mech. Dev.">
        <title>A novel class of murine semaphorins with homology to thrombospondin is differentially expressed during early embryogenesis.</title>
        <authorList>
            <person name="Adams R.H."/>
            <person name="Betz H."/>
            <person name="Pueschel A.W."/>
        </authorList>
    </citation>
    <scope>NUCLEOTIDE SEQUENCE [MRNA] (ISOFORM 1)</scope>
    <scope>FUNCTION</scope>
    <scope>TISSUE SPECIFICITY</scope>
    <scope>DEVELOPMENTAL STAGE</scope>
    <source>
        <strain>NMRI</strain>
    </source>
</reference>
<reference key="2">
    <citation type="journal article" date="2009" name="PLoS Biol.">
        <title>Lineage-specific biology revealed by a finished genome assembly of the mouse.</title>
        <authorList>
            <person name="Church D.M."/>
            <person name="Goodstadt L."/>
            <person name="Hillier L.W."/>
            <person name="Zody M.C."/>
            <person name="Goldstein S."/>
            <person name="She X."/>
            <person name="Bult C.J."/>
            <person name="Agarwala R."/>
            <person name="Cherry J.L."/>
            <person name="DiCuccio M."/>
            <person name="Hlavina W."/>
            <person name="Kapustin Y."/>
            <person name="Meric P."/>
            <person name="Maglott D."/>
            <person name="Birtle Z."/>
            <person name="Marques A.C."/>
            <person name="Graves T."/>
            <person name="Zhou S."/>
            <person name="Teague B."/>
            <person name="Potamousis K."/>
            <person name="Churas C."/>
            <person name="Place M."/>
            <person name="Herschleb J."/>
            <person name="Runnheim R."/>
            <person name="Forrest D."/>
            <person name="Amos-Landgraf J."/>
            <person name="Schwartz D.C."/>
            <person name="Cheng Z."/>
            <person name="Lindblad-Toh K."/>
            <person name="Eichler E.E."/>
            <person name="Ponting C.P."/>
        </authorList>
    </citation>
    <scope>NUCLEOTIDE SEQUENCE [LARGE SCALE GENOMIC DNA]</scope>
    <source>
        <strain>C57BL/6J</strain>
    </source>
</reference>
<reference key="3">
    <citation type="submission" date="2005-07" db="EMBL/GenBank/DDBJ databases">
        <authorList>
            <person name="Mural R.J."/>
            <person name="Adams M.D."/>
            <person name="Myers E.W."/>
            <person name="Smith H.O."/>
            <person name="Venter J.C."/>
        </authorList>
    </citation>
    <scope>NUCLEOTIDE SEQUENCE [LARGE SCALE GENOMIC DNA]</scope>
</reference>
<reference key="4">
    <citation type="journal article" date="2004" name="Genome Res.">
        <title>The status, quality, and expansion of the NIH full-length cDNA project: the Mammalian Gene Collection (MGC).</title>
        <authorList>
            <consortium name="The MGC Project Team"/>
        </authorList>
    </citation>
    <scope>NUCLEOTIDE SEQUENCE [LARGE SCALE MRNA] (ISOFORM 3)</scope>
    <source>
        <strain>C57BL/6J</strain>
        <tissue>Brain</tissue>
    </source>
</reference>
<reference key="5">
    <citation type="journal article" date="2003" name="DNA Res.">
        <title>Prediction of the coding sequences of mouse homologues of KIAA gene: III. The complete nucleotide sequences of 500 mouse KIAA-homologous cDNAs identified by screening of terminal sequences of cDNA clones randomly sampled from size-fractionated libraries.</title>
        <authorList>
            <person name="Okazaki N."/>
            <person name="Kikuno R."/>
            <person name="Ohara R."/>
            <person name="Inamoto S."/>
            <person name="Koseki H."/>
            <person name="Hiraoka S."/>
            <person name="Saga Y."/>
            <person name="Nagase T."/>
            <person name="Ohara O."/>
            <person name="Koga H."/>
        </authorList>
    </citation>
    <scope>NUCLEOTIDE SEQUENCE [LARGE SCALE MRNA] OF 462-1093 (ISOFORM 1)</scope>
    <source>
        <tissue>Embryonic tail</tissue>
    </source>
</reference>
<reference key="6">
    <citation type="journal article" date="2005" name="Science">
        <title>The transcriptional landscape of the mammalian genome.</title>
        <authorList>
            <person name="Carninci P."/>
            <person name="Kasukawa T."/>
            <person name="Katayama S."/>
            <person name="Gough J."/>
            <person name="Frith M.C."/>
            <person name="Maeda N."/>
            <person name="Oyama R."/>
            <person name="Ravasi T."/>
            <person name="Lenhard B."/>
            <person name="Wells C."/>
            <person name="Kodzius R."/>
            <person name="Shimokawa K."/>
            <person name="Bajic V.B."/>
            <person name="Brenner S.E."/>
            <person name="Batalov S."/>
            <person name="Forrest A.R."/>
            <person name="Zavolan M."/>
            <person name="Davis M.J."/>
            <person name="Wilming L.G."/>
            <person name="Aidinis V."/>
            <person name="Allen J.E."/>
            <person name="Ambesi-Impiombato A."/>
            <person name="Apweiler R."/>
            <person name="Aturaliya R.N."/>
            <person name="Bailey T.L."/>
            <person name="Bansal M."/>
            <person name="Baxter L."/>
            <person name="Beisel K.W."/>
            <person name="Bersano T."/>
            <person name="Bono H."/>
            <person name="Chalk A.M."/>
            <person name="Chiu K.P."/>
            <person name="Choudhary V."/>
            <person name="Christoffels A."/>
            <person name="Clutterbuck D.R."/>
            <person name="Crowe M.L."/>
            <person name="Dalla E."/>
            <person name="Dalrymple B.P."/>
            <person name="de Bono B."/>
            <person name="Della Gatta G."/>
            <person name="di Bernardo D."/>
            <person name="Down T."/>
            <person name="Engstrom P."/>
            <person name="Fagiolini M."/>
            <person name="Faulkner G."/>
            <person name="Fletcher C.F."/>
            <person name="Fukushima T."/>
            <person name="Furuno M."/>
            <person name="Futaki S."/>
            <person name="Gariboldi M."/>
            <person name="Georgii-Hemming P."/>
            <person name="Gingeras T.R."/>
            <person name="Gojobori T."/>
            <person name="Green R.E."/>
            <person name="Gustincich S."/>
            <person name="Harbers M."/>
            <person name="Hayashi Y."/>
            <person name="Hensch T.K."/>
            <person name="Hirokawa N."/>
            <person name="Hill D."/>
            <person name="Huminiecki L."/>
            <person name="Iacono M."/>
            <person name="Ikeo K."/>
            <person name="Iwama A."/>
            <person name="Ishikawa T."/>
            <person name="Jakt M."/>
            <person name="Kanapin A."/>
            <person name="Katoh M."/>
            <person name="Kawasawa Y."/>
            <person name="Kelso J."/>
            <person name="Kitamura H."/>
            <person name="Kitano H."/>
            <person name="Kollias G."/>
            <person name="Krishnan S.P."/>
            <person name="Kruger A."/>
            <person name="Kummerfeld S.K."/>
            <person name="Kurochkin I.V."/>
            <person name="Lareau L.F."/>
            <person name="Lazarevic D."/>
            <person name="Lipovich L."/>
            <person name="Liu J."/>
            <person name="Liuni S."/>
            <person name="McWilliam S."/>
            <person name="Madan Babu M."/>
            <person name="Madera M."/>
            <person name="Marchionni L."/>
            <person name="Matsuda H."/>
            <person name="Matsuzawa S."/>
            <person name="Miki H."/>
            <person name="Mignone F."/>
            <person name="Miyake S."/>
            <person name="Morris K."/>
            <person name="Mottagui-Tabar S."/>
            <person name="Mulder N."/>
            <person name="Nakano N."/>
            <person name="Nakauchi H."/>
            <person name="Ng P."/>
            <person name="Nilsson R."/>
            <person name="Nishiguchi S."/>
            <person name="Nishikawa S."/>
            <person name="Nori F."/>
            <person name="Ohara O."/>
            <person name="Okazaki Y."/>
            <person name="Orlando V."/>
            <person name="Pang K.C."/>
            <person name="Pavan W.J."/>
            <person name="Pavesi G."/>
            <person name="Pesole G."/>
            <person name="Petrovsky N."/>
            <person name="Piazza S."/>
            <person name="Reed J."/>
            <person name="Reid J.F."/>
            <person name="Ring B.Z."/>
            <person name="Ringwald M."/>
            <person name="Rost B."/>
            <person name="Ruan Y."/>
            <person name="Salzberg S.L."/>
            <person name="Sandelin A."/>
            <person name="Schneider C."/>
            <person name="Schoenbach C."/>
            <person name="Sekiguchi K."/>
            <person name="Semple C.A."/>
            <person name="Seno S."/>
            <person name="Sessa L."/>
            <person name="Sheng Y."/>
            <person name="Shibata Y."/>
            <person name="Shimada H."/>
            <person name="Shimada K."/>
            <person name="Silva D."/>
            <person name="Sinclair B."/>
            <person name="Sperling S."/>
            <person name="Stupka E."/>
            <person name="Sugiura K."/>
            <person name="Sultana R."/>
            <person name="Takenaka Y."/>
            <person name="Taki K."/>
            <person name="Tammoja K."/>
            <person name="Tan S.L."/>
            <person name="Tang S."/>
            <person name="Taylor M.S."/>
            <person name="Tegner J."/>
            <person name="Teichmann S.A."/>
            <person name="Ueda H.R."/>
            <person name="van Nimwegen E."/>
            <person name="Verardo R."/>
            <person name="Wei C.L."/>
            <person name="Yagi K."/>
            <person name="Yamanishi H."/>
            <person name="Zabarovsky E."/>
            <person name="Zhu S."/>
            <person name="Zimmer A."/>
            <person name="Hide W."/>
            <person name="Bult C."/>
            <person name="Grimmond S.M."/>
            <person name="Teasdale R.D."/>
            <person name="Liu E.T."/>
            <person name="Brusic V."/>
            <person name="Quackenbush J."/>
            <person name="Wahlestedt C."/>
            <person name="Mattick J.S."/>
            <person name="Hume D.A."/>
            <person name="Kai C."/>
            <person name="Sasaki D."/>
            <person name="Tomaru Y."/>
            <person name="Fukuda S."/>
            <person name="Kanamori-Katayama M."/>
            <person name="Suzuki M."/>
            <person name="Aoki J."/>
            <person name="Arakawa T."/>
            <person name="Iida J."/>
            <person name="Imamura K."/>
            <person name="Itoh M."/>
            <person name="Kato T."/>
            <person name="Kawaji H."/>
            <person name="Kawagashira N."/>
            <person name="Kawashima T."/>
            <person name="Kojima M."/>
            <person name="Kondo S."/>
            <person name="Konno H."/>
            <person name="Nakano K."/>
            <person name="Ninomiya N."/>
            <person name="Nishio T."/>
            <person name="Okada M."/>
            <person name="Plessy C."/>
            <person name="Shibata K."/>
            <person name="Shiraki T."/>
            <person name="Suzuki S."/>
            <person name="Tagami M."/>
            <person name="Waki K."/>
            <person name="Watahiki A."/>
            <person name="Okamura-Oho Y."/>
            <person name="Suzuki H."/>
            <person name="Kawai J."/>
            <person name="Hayashizaki Y."/>
        </authorList>
    </citation>
    <scope>NUCLEOTIDE SEQUENCE [LARGE SCALE MRNA] OF 594-1093 (ISOFORM 2)</scope>
    <source>
        <strain>C57BL/6J</strain>
        <tissue>Adrenal gland</tissue>
    </source>
</reference>
<name>SEM5B_MOUSE</name>
<sequence>MVVPGPLALSLLLSSLTLLVSHLSSSQDIASESSSEQQMCTRREHPIVAFEDLKPWVFNFTYPGVRDFSQLALDPSRNQLIVGARNYLFRLSLANVSLLQATEWASSEDTRRSCQSKGKTEEECQNYVRVLIVSGRKVFMCGTNAFSPVCSSRQVGNLSRTIEKINGVARCPYDPRHNSTAVISSQGELYAATVIDFSGRDPAIYRSLGSGPPLRTAQYNSKWLNEPNFVAAFDIGLFAYFFLRENAVEHDCGRTVYSRVARVCKNDVGGRFLLEDTWTTFMKARLNCSRPGEVPFYYNELQSAFHLPEQDLIYGVFTTNVNSIAASAVCAFNLSAISKAFNGPFRYQENPRAAWLPIANPIPNFQCGTLPETGPNENLTERSLQDAQRLFLMSEAVQPVTPEPCVTQDSVRFSHLVVDLVQAKDTLYHVLYIGTESGTILKALSTASRSLRGCYLEELHVLPPGRLEPLRSLRILHSARALFVGLSDRVLRVPLERCSAYHSQGACLGARDPYCGWDGKRQLCSTLEDSSNMSLWIQNITTCPVRNVTRDGGFGPWSPWKPCEHLDGDNSGSCLCRARSCDSPRPRCGGLECLGPSIHIANCSRNGAWTAWSSWAQCSTSCGIGFQVRQRSCSNPAPRHGGRICVGKSREERFCNENTPCPVPIFWASWGSWSKCSNNCGGGVQSRRRSCENGNSCPGCGVEFKTCNPEACPEVRRNTPWTPWLPVNVTQGGARQEQRFRFTCRAPLPDPHGLQFGKRRTETRTCPADGTGACDTDALVEDLLRSGSTSPHTLNGGWATWGPWSSCSRDCELGFRVRKRTCTNPEPRNGGLPCVGDAAEYQDCNPQACPVRGAWSCWTAWSQCSASCGGGHYQRTRSCTSPAPSPGEDICLGLHTEEALCSTQACPEGWSLWSEWGVCTEDGAQSRSRSCEELLPGPGACVGNSSQSRPCPYSEIPVILPASSVEETTSCGGFNLIHLIVTGVSCFLVSGLLTLAVYLSCQHCQRQSQESTLVHPATPNHLHYKGGGTPKNEKYTPMEFKTLNKNNLIPDDRANFYPLQQTNVYTTTYYPSPLNKPSFRPEASPGQRCFPNS</sequence>
<gene>
    <name type="primary">Sema5b</name>
    <name type="synonym">Kiaa1445</name>
    <name type="synonym">Semag</name>
    <name type="synonym">SemG</name>
</gene>
<proteinExistence type="evidence at transcript level"/>
<comment type="function">
    <text evidence="4">May act as a positive axonal guidance cue.</text>
</comment>
<comment type="subcellular location">
    <subcellularLocation>
        <location evidence="1">Membrane</location>
        <topology evidence="1">Single-pass type I membrane protein</topology>
    </subcellularLocation>
</comment>
<comment type="alternative products">
    <event type="alternative splicing"/>
    <isoform>
        <id>Q60519-1</id>
        <name>1</name>
        <sequence type="displayed"/>
    </isoform>
    <isoform>
        <id>Q60519-2</id>
        <name>2</name>
        <sequence type="described" ref="VSP_029467 VSP_029468"/>
    </isoform>
    <isoform>
        <id>Q60519-3</id>
        <name>3</name>
        <sequence type="described" ref="VSP_029466"/>
    </isoform>
</comment>
<comment type="tissue specificity">
    <text evidence="4">In adult, only detected in brain.</text>
</comment>
<comment type="developmental stage">
    <text evidence="4">Differentially expressed in embryonic and adult tissues (PubMed:8817451). Its abundance decreases from 10 dpc to birth (PubMed:8817451).</text>
</comment>
<comment type="similarity">
    <text evidence="7">Belongs to the semaphorin family.</text>
</comment>
<accession>Q60519</accession>
<accession>B1B1A9</accession>
<accession>Q6ZPQ8</accession>
<accession>Q7TT33</accession>
<accession>Q8BVE5</accession>